<protein>
    <recommendedName>
        <fullName>Uncharacterized protein Mb0899c</fullName>
    </recommendedName>
</protein>
<feature type="signal peptide" evidence="1">
    <location>
        <begin position="1"/>
        <end position="24"/>
    </location>
</feature>
<feature type="chain" id="PRO_0000014080" description="Uncharacterized protein Mb0899c">
    <location>
        <begin position="25"/>
        <end position="162"/>
    </location>
</feature>
<dbReference type="EMBL" id="LT708304">
    <property type="protein sequence ID" value="SIT99497.1"/>
    <property type="molecule type" value="Genomic_DNA"/>
</dbReference>
<dbReference type="RefSeq" id="NP_854556.1">
    <property type="nucleotide sequence ID" value="NC_002945.3"/>
</dbReference>
<dbReference type="RefSeq" id="WP_003404591.1">
    <property type="nucleotide sequence ID" value="NC_002945.4"/>
</dbReference>
<dbReference type="KEGG" id="mbo:BQ2027_MB0899C"/>
<dbReference type="PATRIC" id="fig|233413.5.peg.978"/>
<dbReference type="Proteomes" id="UP000001419">
    <property type="component" value="Chromosome"/>
</dbReference>
<dbReference type="InterPro" id="IPR024495">
    <property type="entry name" value="DUF2771"/>
</dbReference>
<dbReference type="Pfam" id="PF10969">
    <property type="entry name" value="DUF2771"/>
    <property type="match status" value="1"/>
</dbReference>
<sequence length="162" mass="17833">MKRGVATLPVILVILLSVAAGAGAWLLVRGHGPQQPEISAYSHGHLTRVGPYLYCNVVDLDDCQTPQAQGELPVSERYPVQLSVPEVISRAPWRLLQVYQDPANTTSTLFRPDTRLAVTIPTVDPQRGRLTGIVVQLLTLVVDHSGELRDVPHAEWSVRLIF</sequence>
<name>Y899_MYCBO</name>
<proteinExistence type="inferred from homology"/>
<reference key="1">
    <citation type="journal article" date="2003" name="Proc. Natl. Acad. Sci. U.S.A.">
        <title>The complete genome sequence of Mycobacterium bovis.</title>
        <authorList>
            <person name="Garnier T."/>
            <person name="Eiglmeier K."/>
            <person name="Camus J.-C."/>
            <person name="Medina N."/>
            <person name="Mansoor H."/>
            <person name="Pryor M."/>
            <person name="Duthoy S."/>
            <person name="Grondin S."/>
            <person name="Lacroix C."/>
            <person name="Monsempe C."/>
            <person name="Simon S."/>
            <person name="Harris B."/>
            <person name="Atkin R."/>
            <person name="Doggett J."/>
            <person name="Mayes R."/>
            <person name="Keating L."/>
            <person name="Wheeler P.R."/>
            <person name="Parkhill J."/>
            <person name="Barrell B.G."/>
            <person name="Cole S.T."/>
            <person name="Gordon S.V."/>
            <person name="Hewinson R.G."/>
        </authorList>
    </citation>
    <scope>NUCLEOTIDE SEQUENCE [LARGE SCALE GENOMIC DNA]</scope>
    <source>
        <strain>ATCC BAA-935 / AF2122/97</strain>
    </source>
</reference>
<reference key="2">
    <citation type="journal article" date="2017" name="Genome Announc.">
        <title>Updated reference genome sequence and annotation of Mycobacterium bovis AF2122/97.</title>
        <authorList>
            <person name="Malone K.M."/>
            <person name="Farrell D."/>
            <person name="Stuber T.P."/>
            <person name="Schubert O.T."/>
            <person name="Aebersold R."/>
            <person name="Robbe-Austerman S."/>
            <person name="Gordon S.V."/>
        </authorList>
    </citation>
    <scope>NUCLEOTIDE SEQUENCE [LARGE SCALE GENOMIC DNA]</scope>
    <scope>GENOME REANNOTATION</scope>
    <source>
        <strain>ATCC BAA-935 / AF2122/97</strain>
    </source>
</reference>
<evidence type="ECO:0000255" key="1"/>
<organism>
    <name type="scientific">Mycobacterium bovis (strain ATCC BAA-935 / AF2122/97)</name>
    <dbReference type="NCBI Taxonomy" id="233413"/>
    <lineage>
        <taxon>Bacteria</taxon>
        <taxon>Bacillati</taxon>
        <taxon>Actinomycetota</taxon>
        <taxon>Actinomycetes</taxon>
        <taxon>Mycobacteriales</taxon>
        <taxon>Mycobacteriaceae</taxon>
        <taxon>Mycobacterium</taxon>
        <taxon>Mycobacterium tuberculosis complex</taxon>
    </lineage>
</organism>
<gene>
    <name type="ordered locus">BQ2027_MB0899C</name>
</gene>
<accession>P64732</accession>
<accession>A0A1R3XWP8</accession>
<accession>Q10537</accession>
<accession>X2BGA5</accession>
<keyword id="KW-1185">Reference proteome</keyword>
<keyword id="KW-0732">Signal</keyword>